<evidence type="ECO:0000255" key="1"/>
<evidence type="ECO:0000255" key="2">
    <source>
        <dbReference type="PROSITE-ProRule" id="PRU00114"/>
    </source>
</evidence>
<evidence type="ECO:0000255" key="3">
    <source>
        <dbReference type="PROSITE-ProRule" id="PRU00316"/>
    </source>
</evidence>
<evidence type="ECO:0000256" key="4">
    <source>
        <dbReference type="SAM" id="MobiDB-lite"/>
    </source>
</evidence>
<evidence type="ECO:0000312" key="5">
    <source>
        <dbReference type="HGNC" id="HGNC:27879"/>
    </source>
</evidence>
<comment type="subcellular location">
    <subcellularLocation>
        <location evidence="1">Membrane</location>
        <topology evidence="1">Single-pass membrane protein</topology>
    </subcellularLocation>
</comment>
<protein>
    <recommendedName>
        <fullName evidence="5">V-set and immunoglobulin domain-containing protein 10-like 2</fullName>
    </recommendedName>
</protein>
<sequence length="767" mass="81629">MVGQRAQHSPVSLLLLIHLCLLHLRASGQPHPTPEAPVEEVVSVQGVRGGSVELACGSGPAPLLVLWSFTPLGSLVPRPVAVTDGAMSKVEAIASALGVVSLRNSSLVLGELHEGARGHFLCQVLHVAGGQLHAAYSHLTLAVLVPVSKPQVRLSNPSPVEGASVVATCAVREGTEPVTFAWQHRAPRGLGEALVGVTEPLFQLDPVNRTHLGWYMCSASNSVNRLSSDGAFLDVIYGPDKPVITMEPLGLTEEGFWASEREEVTLSCLAASNPPSHYVWLRDHTQVHTGPTYVIARAGRVHTGLYTCLARNSYLDTRTQTTVQLTIYYPPEGQPSCAVHPSPEAVTLLCAWPGGLPPAQLQWEGPQGPGPTAPSNVTWSHAAAQLPSGSVFTCTGQHPALAPPALCTVMLWEPLGRPTCWSTATMGDQFIMLSCEWPGGEPPATLGWLDEQQQPLGGSSSSMAVHLLQAQEDLAGREFTCRGTHLLRTPDPHCHLQLEAPQLDVAEPRVSVLEGGEAWLECSLRGGTPPAQLLWLGPQQQKVDPGTSGFMLHPEGAQLRLGIYDADPAHHRGTYQCVARNAVGNSSQSVLLEVLRYPAPPNVTISRLTYGRHRREVQLQWAILGPGNLTGFLVQRKASALGPGAGAWETAASDIEPESRGRRLGGLDPGVLYAFRILALNHHTAGHPSEVKIPADPPFSAYPAVLGAAGTGMVVATVASLLVFQYAARHPETFPRLETPTTTPGLDPAQETTDSPVNVTITVTATP</sequence>
<keyword id="KW-1015">Disulfide bond</keyword>
<keyword id="KW-0325">Glycoprotein</keyword>
<keyword id="KW-0393">Immunoglobulin domain</keyword>
<keyword id="KW-0472">Membrane</keyword>
<keyword id="KW-1185">Reference proteome</keyword>
<keyword id="KW-0677">Repeat</keyword>
<keyword id="KW-0732">Signal</keyword>
<keyword id="KW-0812">Transmembrane</keyword>
<keyword id="KW-1133">Transmembrane helix</keyword>
<dbReference type="EMBL" id="AP000842">
    <property type="status" value="NOT_ANNOTATED_CDS"/>
    <property type="molecule type" value="Genomic_DNA"/>
</dbReference>
<dbReference type="GlyCosmos" id="P0DP72">
    <property type="glycosylation" value="3 sites, No reported glycans"/>
</dbReference>
<dbReference type="GlyGen" id="P0DP72">
    <property type="glycosylation" value="5 sites"/>
</dbReference>
<dbReference type="BioMuta" id="VSIG10L2"/>
<dbReference type="MassIVE" id="P0DP72"/>
<dbReference type="Ensembl" id="ENST00000638636.2">
    <property type="protein sequence ID" value="ENSP00000491467.1"/>
    <property type="gene ID" value="ENSG00000283703.3"/>
</dbReference>
<dbReference type="AGR" id="HGNC:27879"/>
<dbReference type="GeneCards" id="VSIG10L2"/>
<dbReference type="HGNC" id="HGNC:27879">
    <property type="gene designation" value="VSIG10L2"/>
</dbReference>
<dbReference type="HPA" id="ENSG00000283703">
    <property type="expression patterns" value="Tissue enriched (skin)"/>
</dbReference>
<dbReference type="neXtProt" id="NX_P0DP72"/>
<dbReference type="VEuPathDB" id="HostDB:ENSG00000283703"/>
<dbReference type="GeneTree" id="ENSGT00940000163088"/>
<dbReference type="InParanoid" id="P0DP72"/>
<dbReference type="OMA" id="DPVNRTH"/>
<dbReference type="OrthoDB" id="9442762at2759"/>
<dbReference type="PAN-GO" id="P0DP72">
    <property type="GO annotations" value="4 GO annotations based on evolutionary models"/>
</dbReference>
<dbReference type="Pharos" id="P0DP72">
    <property type="development level" value="Tdark"/>
</dbReference>
<dbReference type="PRO" id="PR:P0DP72"/>
<dbReference type="Proteomes" id="UP000005640">
    <property type="component" value="Chromosome 11"/>
</dbReference>
<dbReference type="RNAct" id="P0DP72">
    <property type="molecule type" value="protein"/>
</dbReference>
<dbReference type="Bgee" id="ENSG00000283703">
    <property type="expression patterns" value="Expressed in skin of abdomen and 102 other cell types or tissues"/>
</dbReference>
<dbReference type="ExpressionAtlas" id="P0DP72">
    <property type="expression patterns" value="baseline and differential"/>
</dbReference>
<dbReference type="GO" id="GO:0005911">
    <property type="term" value="C:cell-cell junction"/>
    <property type="evidence" value="ECO:0000318"/>
    <property type="project" value="GO_Central"/>
</dbReference>
<dbReference type="GO" id="GO:0005886">
    <property type="term" value="C:plasma membrane"/>
    <property type="evidence" value="ECO:0000318"/>
    <property type="project" value="GO_Central"/>
</dbReference>
<dbReference type="GO" id="GO:0050839">
    <property type="term" value="F:cell adhesion molecule binding"/>
    <property type="evidence" value="ECO:0000318"/>
    <property type="project" value="GO_Central"/>
</dbReference>
<dbReference type="GO" id="GO:0098609">
    <property type="term" value="P:cell-cell adhesion"/>
    <property type="evidence" value="ECO:0000318"/>
    <property type="project" value="GO_Central"/>
</dbReference>
<dbReference type="CDD" id="cd00063">
    <property type="entry name" value="FN3"/>
    <property type="match status" value="1"/>
</dbReference>
<dbReference type="CDD" id="cd00096">
    <property type="entry name" value="Ig"/>
    <property type="match status" value="1"/>
</dbReference>
<dbReference type="Gene3D" id="2.60.40.10">
    <property type="entry name" value="Immunoglobulins"/>
    <property type="match status" value="4"/>
</dbReference>
<dbReference type="InterPro" id="IPR003961">
    <property type="entry name" value="FN3_dom"/>
</dbReference>
<dbReference type="InterPro" id="IPR036116">
    <property type="entry name" value="FN3_sf"/>
</dbReference>
<dbReference type="InterPro" id="IPR007110">
    <property type="entry name" value="Ig-like_dom"/>
</dbReference>
<dbReference type="InterPro" id="IPR036179">
    <property type="entry name" value="Ig-like_dom_sf"/>
</dbReference>
<dbReference type="InterPro" id="IPR013783">
    <property type="entry name" value="Ig-like_fold"/>
</dbReference>
<dbReference type="InterPro" id="IPR003599">
    <property type="entry name" value="Ig_sub"/>
</dbReference>
<dbReference type="InterPro" id="IPR003598">
    <property type="entry name" value="Ig_sub2"/>
</dbReference>
<dbReference type="InterPro" id="IPR052598">
    <property type="entry name" value="IgSF_CEA-related"/>
</dbReference>
<dbReference type="PANTHER" id="PTHR44337">
    <property type="entry name" value="CARCINOEMBRYONIC ANTIGEN-RELATED CELL ADHESION MOLECULE 8"/>
    <property type="match status" value="1"/>
</dbReference>
<dbReference type="PANTHER" id="PTHR44337:SF8">
    <property type="entry name" value="IMMUNOGLOBULIN SUBTYPE DOMAIN-CONTAINING PROTEIN"/>
    <property type="match status" value="1"/>
</dbReference>
<dbReference type="Pfam" id="PF13927">
    <property type="entry name" value="Ig_3"/>
    <property type="match status" value="2"/>
</dbReference>
<dbReference type="SMART" id="SM00409">
    <property type="entry name" value="IG"/>
    <property type="match status" value="4"/>
</dbReference>
<dbReference type="SMART" id="SM00408">
    <property type="entry name" value="IGc2"/>
    <property type="match status" value="4"/>
</dbReference>
<dbReference type="SUPFAM" id="SSF49265">
    <property type="entry name" value="Fibronectin type III"/>
    <property type="match status" value="1"/>
</dbReference>
<dbReference type="SUPFAM" id="SSF48726">
    <property type="entry name" value="Immunoglobulin"/>
    <property type="match status" value="4"/>
</dbReference>
<dbReference type="PROSITE" id="PS50853">
    <property type="entry name" value="FN3"/>
    <property type="match status" value="1"/>
</dbReference>
<dbReference type="PROSITE" id="PS50835">
    <property type="entry name" value="IG_LIKE"/>
    <property type="match status" value="4"/>
</dbReference>
<proteinExistence type="inferred from homology"/>
<organism>
    <name type="scientific">Homo sapiens</name>
    <name type="common">Human</name>
    <dbReference type="NCBI Taxonomy" id="9606"/>
    <lineage>
        <taxon>Eukaryota</taxon>
        <taxon>Metazoa</taxon>
        <taxon>Chordata</taxon>
        <taxon>Craniata</taxon>
        <taxon>Vertebrata</taxon>
        <taxon>Euteleostomi</taxon>
        <taxon>Mammalia</taxon>
        <taxon>Eutheria</taxon>
        <taxon>Euarchontoglires</taxon>
        <taxon>Primates</taxon>
        <taxon>Haplorrhini</taxon>
        <taxon>Catarrhini</taxon>
        <taxon>Hominidae</taxon>
        <taxon>Homo</taxon>
    </lineage>
</organism>
<name>VSXL2_HUMAN</name>
<reference key="1">
    <citation type="journal article" date="2006" name="Nature">
        <title>Human chromosome 11 DNA sequence and analysis including novel gene identification.</title>
        <authorList>
            <person name="Taylor T.D."/>
            <person name="Noguchi H."/>
            <person name="Totoki Y."/>
            <person name="Toyoda A."/>
            <person name="Kuroki Y."/>
            <person name="Dewar K."/>
            <person name="Lloyd C."/>
            <person name="Itoh T."/>
            <person name="Takeda T."/>
            <person name="Kim D.-W."/>
            <person name="She X."/>
            <person name="Barlow K.F."/>
            <person name="Bloom T."/>
            <person name="Bruford E."/>
            <person name="Chang J.L."/>
            <person name="Cuomo C.A."/>
            <person name="Eichler E."/>
            <person name="FitzGerald M.G."/>
            <person name="Jaffe D.B."/>
            <person name="LaButti K."/>
            <person name="Nicol R."/>
            <person name="Park H.-S."/>
            <person name="Seaman C."/>
            <person name="Sougnez C."/>
            <person name="Yang X."/>
            <person name="Zimmer A.R."/>
            <person name="Zody M.C."/>
            <person name="Birren B.W."/>
            <person name="Nusbaum C."/>
            <person name="Fujiyama A."/>
            <person name="Hattori M."/>
            <person name="Rogers J."/>
            <person name="Lander E.S."/>
            <person name="Sakaki Y."/>
        </authorList>
    </citation>
    <scope>NUCLEOTIDE SEQUENCE [LARGE SCALE GENOMIC DNA]</scope>
</reference>
<accession>P0DP72</accession>
<gene>
    <name evidence="5" type="primary">VSIG10L2</name>
</gene>
<feature type="signal peptide" evidence="1">
    <location>
        <begin position="1"/>
        <end position="28"/>
    </location>
</feature>
<feature type="chain" id="PRO_0000440969" description="V-set and immunoglobulin domain-containing protein 10-like 2" evidence="1">
    <location>
        <begin position="29"/>
        <end position="767"/>
    </location>
</feature>
<feature type="transmembrane region" description="Helical" evidence="1">
    <location>
        <begin position="704"/>
        <end position="724"/>
    </location>
</feature>
<feature type="domain" description="Ig-like 1" evidence="2">
    <location>
        <begin position="34"/>
        <end position="140"/>
    </location>
</feature>
<feature type="domain" description="Ig-like 2" evidence="2">
    <location>
        <begin position="150"/>
        <end position="234"/>
    </location>
</feature>
<feature type="domain" description="Ig-like 3" evidence="2">
    <location>
        <begin position="242"/>
        <end position="324"/>
    </location>
</feature>
<feature type="domain" description="Ig-like 4" evidence="2">
    <location>
        <begin position="399"/>
        <end position="499"/>
    </location>
</feature>
<feature type="domain" description="Ig-like 5" evidence="2">
    <location>
        <begin position="501"/>
        <end position="593"/>
    </location>
</feature>
<feature type="domain" description="Fibronectin type-III" evidence="3">
    <location>
        <begin position="599"/>
        <end position="699"/>
    </location>
</feature>
<feature type="region of interest" description="Disordered" evidence="4">
    <location>
        <begin position="735"/>
        <end position="754"/>
    </location>
</feature>
<feature type="compositionally biased region" description="Polar residues" evidence="4">
    <location>
        <begin position="739"/>
        <end position="754"/>
    </location>
</feature>
<feature type="glycosylation site" description="N-linked (GlcNAc...) asparagine" evidence="1">
    <location>
        <position position="376"/>
    </location>
</feature>
<feature type="glycosylation site" description="N-linked (GlcNAc...) asparagine" evidence="1">
    <location>
        <position position="602"/>
    </location>
</feature>
<feature type="glycosylation site" description="N-linked (GlcNAc...) asparagine" evidence="1">
    <location>
        <position position="628"/>
    </location>
</feature>
<feature type="disulfide bond" evidence="2">
    <location>
        <begin position="56"/>
        <end position="122"/>
    </location>
</feature>
<feature type="disulfide bond" evidence="2">
    <location>
        <begin position="169"/>
        <end position="217"/>
    </location>
</feature>
<feature type="disulfide bond" evidence="2">
    <location>
        <begin position="268"/>
        <end position="308"/>
    </location>
</feature>
<feature type="disulfide bond" evidence="2">
    <location>
        <begin position="435"/>
        <end position="481"/>
    </location>
</feature>
<feature type="disulfide bond" evidence="2">
    <location>
        <begin position="522"/>
        <end position="577"/>
    </location>
</feature>